<keyword id="KW-0067">ATP-binding</keyword>
<keyword id="KW-0997">Cell inner membrane</keyword>
<keyword id="KW-1003">Cell membrane</keyword>
<keyword id="KW-0472">Membrane</keyword>
<keyword id="KW-0547">Nucleotide-binding</keyword>
<keyword id="KW-1278">Translocase</keyword>
<keyword id="KW-0813">Transport</keyword>
<feature type="chain" id="PRO_0000272140" description="Lipoprotein-releasing system ATP-binding protein LolD">
    <location>
        <begin position="1"/>
        <end position="232"/>
    </location>
</feature>
<feature type="domain" description="ABC transporter" evidence="1">
    <location>
        <begin position="11"/>
        <end position="231"/>
    </location>
</feature>
<feature type="binding site" evidence="1">
    <location>
        <begin position="47"/>
        <end position="54"/>
    </location>
    <ligand>
        <name>ATP</name>
        <dbReference type="ChEBI" id="CHEBI:30616"/>
    </ligand>
</feature>
<name>LOLD_RHOPS</name>
<proteinExistence type="inferred from homology"/>
<accession>Q135Z8</accession>
<organism>
    <name type="scientific">Rhodopseudomonas palustris (strain BisB5)</name>
    <dbReference type="NCBI Taxonomy" id="316057"/>
    <lineage>
        <taxon>Bacteria</taxon>
        <taxon>Pseudomonadati</taxon>
        <taxon>Pseudomonadota</taxon>
        <taxon>Alphaproteobacteria</taxon>
        <taxon>Hyphomicrobiales</taxon>
        <taxon>Nitrobacteraceae</taxon>
        <taxon>Rhodopseudomonas</taxon>
    </lineage>
</organism>
<dbReference type="EC" id="7.6.2.-" evidence="1"/>
<dbReference type="EMBL" id="CP000283">
    <property type="protein sequence ID" value="ABE40091.1"/>
    <property type="molecule type" value="Genomic_DNA"/>
</dbReference>
<dbReference type="SMR" id="Q135Z8"/>
<dbReference type="STRING" id="316057.RPD_2863"/>
<dbReference type="KEGG" id="rpd:RPD_2863"/>
<dbReference type="eggNOG" id="COG1136">
    <property type="taxonomic scope" value="Bacteria"/>
</dbReference>
<dbReference type="HOGENOM" id="CLU_000604_1_22_5"/>
<dbReference type="BioCyc" id="RPAL316057:RPD_RS14385-MONOMER"/>
<dbReference type="Proteomes" id="UP000001818">
    <property type="component" value="Chromosome"/>
</dbReference>
<dbReference type="GO" id="GO:0005886">
    <property type="term" value="C:plasma membrane"/>
    <property type="evidence" value="ECO:0007669"/>
    <property type="project" value="UniProtKB-SubCell"/>
</dbReference>
<dbReference type="GO" id="GO:0005524">
    <property type="term" value="F:ATP binding"/>
    <property type="evidence" value="ECO:0007669"/>
    <property type="project" value="UniProtKB-KW"/>
</dbReference>
<dbReference type="GO" id="GO:0016887">
    <property type="term" value="F:ATP hydrolysis activity"/>
    <property type="evidence" value="ECO:0007669"/>
    <property type="project" value="InterPro"/>
</dbReference>
<dbReference type="GO" id="GO:0022857">
    <property type="term" value="F:transmembrane transporter activity"/>
    <property type="evidence" value="ECO:0007669"/>
    <property type="project" value="TreeGrafter"/>
</dbReference>
<dbReference type="GO" id="GO:0044874">
    <property type="term" value="P:lipoprotein localization to outer membrane"/>
    <property type="evidence" value="ECO:0007669"/>
    <property type="project" value="TreeGrafter"/>
</dbReference>
<dbReference type="GO" id="GO:0089705">
    <property type="term" value="P:protein localization to outer membrane"/>
    <property type="evidence" value="ECO:0007669"/>
    <property type="project" value="TreeGrafter"/>
</dbReference>
<dbReference type="CDD" id="cd03255">
    <property type="entry name" value="ABC_MJ0796_LolCDE_FtsE"/>
    <property type="match status" value="1"/>
</dbReference>
<dbReference type="FunFam" id="3.40.50.300:FF:000032">
    <property type="entry name" value="Export ABC transporter ATP-binding protein"/>
    <property type="match status" value="1"/>
</dbReference>
<dbReference type="Gene3D" id="3.40.50.300">
    <property type="entry name" value="P-loop containing nucleotide triphosphate hydrolases"/>
    <property type="match status" value="1"/>
</dbReference>
<dbReference type="InterPro" id="IPR003593">
    <property type="entry name" value="AAA+_ATPase"/>
</dbReference>
<dbReference type="InterPro" id="IPR003439">
    <property type="entry name" value="ABC_transporter-like_ATP-bd"/>
</dbReference>
<dbReference type="InterPro" id="IPR017871">
    <property type="entry name" value="ABC_transporter-like_CS"/>
</dbReference>
<dbReference type="InterPro" id="IPR015854">
    <property type="entry name" value="ABC_transpr_LolD-like"/>
</dbReference>
<dbReference type="InterPro" id="IPR017911">
    <property type="entry name" value="MacB-like_ATP-bd"/>
</dbReference>
<dbReference type="InterPro" id="IPR027417">
    <property type="entry name" value="P-loop_NTPase"/>
</dbReference>
<dbReference type="PANTHER" id="PTHR24220">
    <property type="entry name" value="IMPORT ATP-BINDING PROTEIN"/>
    <property type="match status" value="1"/>
</dbReference>
<dbReference type="PANTHER" id="PTHR24220:SF689">
    <property type="entry name" value="LIPOPROTEIN-RELEASING SYSTEM ATP-BINDING PROTEIN LOLD"/>
    <property type="match status" value="1"/>
</dbReference>
<dbReference type="Pfam" id="PF00005">
    <property type="entry name" value="ABC_tran"/>
    <property type="match status" value="1"/>
</dbReference>
<dbReference type="SMART" id="SM00382">
    <property type="entry name" value="AAA"/>
    <property type="match status" value="1"/>
</dbReference>
<dbReference type="SUPFAM" id="SSF52540">
    <property type="entry name" value="P-loop containing nucleoside triphosphate hydrolases"/>
    <property type="match status" value="1"/>
</dbReference>
<dbReference type="PROSITE" id="PS00211">
    <property type="entry name" value="ABC_TRANSPORTER_1"/>
    <property type="match status" value="1"/>
</dbReference>
<dbReference type="PROSITE" id="PS50893">
    <property type="entry name" value="ABC_TRANSPORTER_2"/>
    <property type="match status" value="1"/>
</dbReference>
<dbReference type="PROSITE" id="PS51244">
    <property type="entry name" value="LOLD"/>
    <property type="match status" value="1"/>
</dbReference>
<evidence type="ECO:0000255" key="1">
    <source>
        <dbReference type="HAMAP-Rule" id="MF_01708"/>
    </source>
</evidence>
<sequence length="232" mass="25299">MEQGAEDIPVVYLHDIKRQYTQGEATLTILNGAKLALWAGQSVALVAPSGSGKSTLLHIAGLLEHPDEGEVYVSGAATTALTDAERTQIRRTDIGFVYQSHRLLPEFTALENVMMPQMIRGLKRSETVSRAKEILAYLGLADRITHRPSELSGGEQQRVAIARAVANAPRVLFADEPTGNLDPHTADHVFKALTQLVKATQVAMLIATHNMELAGRMDRRVSIEDGVIVELE</sequence>
<comment type="function">
    <text evidence="1">Part of the ABC transporter complex LolCDE involved in the translocation of mature outer membrane-directed lipoproteins, from the inner membrane to the periplasmic chaperone, LolA. Responsible for the formation of the LolA-lipoprotein complex in an ATP-dependent manner.</text>
</comment>
<comment type="subunit">
    <text evidence="1">The complex is composed of two ATP-binding proteins (LolD) and two transmembrane proteins (LolC and LolE).</text>
</comment>
<comment type="subcellular location">
    <subcellularLocation>
        <location evidence="1">Cell inner membrane</location>
        <topology evidence="1">Peripheral membrane protein</topology>
    </subcellularLocation>
</comment>
<comment type="similarity">
    <text evidence="1">Belongs to the ABC transporter superfamily. Lipoprotein translocase (TC 3.A.1.125) family.</text>
</comment>
<reference key="1">
    <citation type="submission" date="2006-03" db="EMBL/GenBank/DDBJ databases">
        <title>Complete sequence of Rhodopseudomonas palustris BisB5.</title>
        <authorList>
            <consortium name="US DOE Joint Genome Institute"/>
            <person name="Copeland A."/>
            <person name="Lucas S."/>
            <person name="Lapidus A."/>
            <person name="Barry K."/>
            <person name="Detter J.C."/>
            <person name="Glavina del Rio T."/>
            <person name="Hammon N."/>
            <person name="Israni S."/>
            <person name="Dalin E."/>
            <person name="Tice H."/>
            <person name="Pitluck S."/>
            <person name="Chain P."/>
            <person name="Malfatti S."/>
            <person name="Shin M."/>
            <person name="Vergez L."/>
            <person name="Schmutz J."/>
            <person name="Larimer F."/>
            <person name="Land M."/>
            <person name="Hauser L."/>
            <person name="Pelletier D.A."/>
            <person name="Kyrpides N."/>
            <person name="Lykidis A."/>
            <person name="Oda Y."/>
            <person name="Harwood C.S."/>
            <person name="Richardson P."/>
        </authorList>
    </citation>
    <scope>NUCLEOTIDE SEQUENCE [LARGE SCALE GENOMIC DNA]</scope>
    <source>
        <strain>BisB5</strain>
    </source>
</reference>
<gene>
    <name evidence="1" type="primary">lolD</name>
    <name type="ordered locus">RPD_2863</name>
</gene>
<protein>
    <recommendedName>
        <fullName evidence="1">Lipoprotein-releasing system ATP-binding protein LolD</fullName>
        <ecNumber evidence="1">7.6.2.-</ecNumber>
    </recommendedName>
</protein>